<feature type="chain" id="PRO_0000395445" description="G antigen 2A">
    <location>
        <begin position="1"/>
        <end position="116"/>
    </location>
</feature>
<feature type="region of interest" description="Disordered" evidence="1">
    <location>
        <begin position="1"/>
        <end position="116"/>
    </location>
</feature>
<feature type="compositionally biased region" description="Acidic residues" evidence="1">
    <location>
        <begin position="31"/>
        <end position="44"/>
    </location>
</feature>
<feature type="compositionally biased region" description="Acidic residues" evidence="1">
    <location>
        <begin position="86"/>
        <end position="95"/>
    </location>
</feature>
<feature type="compositionally biased region" description="Basic and acidic residues" evidence="1">
    <location>
        <begin position="102"/>
        <end position="116"/>
    </location>
</feature>
<sequence length="116" mass="12785">MSWRGRSTYRPRPRRYVEPPEMIGPMRPEQFSDEVEPATPEEGEPATQRQDPAAAQEGQDEGASAGQGPKPEAHSQEQGHPQTGCECEDGPDGQEMDPPNPEEVKTPEEGEKQSQC</sequence>
<keyword id="KW-1185">Reference proteome</keyword>
<gene>
    <name type="primary">GAGE2A</name>
    <name type="synonym">GAGE2</name>
</gene>
<name>GAG2A_HUMAN</name>
<evidence type="ECO:0000256" key="1">
    <source>
        <dbReference type="SAM" id="MobiDB-lite"/>
    </source>
</evidence>
<evidence type="ECO:0000305" key="2"/>
<accession>Q6NT46</accession>
<organism>
    <name type="scientific">Homo sapiens</name>
    <name type="common">Human</name>
    <dbReference type="NCBI Taxonomy" id="9606"/>
    <lineage>
        <taxon>Eukaryota</taxon>
        <taxon>Metazoa</taxon>
        <taxon>Chordata</taxon>
        <taxon>Craniata</taxon>
        <taxon>Vertebrata</taxon>
        <taxon>Euteleostomi</taxon>
        <taxon>Mammalia</taxon>
        <taxon>Eutheria</taxon>
        <taxon>Euarchontoglires</taxon>
        <taxon>Primates</taxon>
        <taxon>Haplorrhini</taxon>
        <taxon>Catarrhini</taxon>
        <taxon>Hominidae</taxon>
        <taxon>Homo</taxon>
    </lineage>
</organism>
<proteinExistence type="evidence at protein level"/>
<protein>
    <recommendedName>
        <fullName>G antigen 2A</fullName>
        <shortName>GAGE-2A</shortName>
    </recommendedName>
</protein>
<reference key="1">
    <citation type="journal article" date="2005" name="Nature">
        <title>The DNA sequence of the human X chromosome.</title>
        <authorList>
            <person name="Ross M.T."/>
            <person name="Grafham D.V."/>
            <person name="Coffey A.J."/>
            <person name="Scherer S."/>
            <person name="McLay K."/>
            <person name="Muzny D."/>
            <person name="Platzer M."/>
            <person name="Howell G.R."/>
            <person name="Burrows C."/>
            <person name="Bird C.P."/>
            <person name="Frankish A."/>
            <person name="Lovell F.L."/>
            <person name="Howe K.L."/>
            <person name="Ashurst J.L."/>
            <person name="Fulton R.S."/>
            <person name="Sudbrak R."/>
            <person name="Wen G."/>
            <person name="Jones M.C."/>
            <person name="Hurles M.E."/>
            <person name="Andrews T.D."/>
            <person name="Scott C.E."/>
            <person name="Searle S."/>
            <person name="Ramser J."/>
            <person name="Whittaker A."/>
            <person name="Deadman R."/>
            <person name="Carter N.P."/>
            <person name="Hunt S.E."/>
            <person name="Chen R."/>
            <person name="Cree A."/>
            <person name="Gunaratne P."/>
            <person name="Havlak P."/>
            <person name="Hodgson A."/>
            <person name="Metzker M.L."/>
            <person name="Richards S."/>
            <person name="Scott G."/>
            <person name="Steffen D."/>
            <person name="Sodergren E."/>
            <person name="Wheeler D.A."/>
            <person name="Worley K.C."/>
            <person name="Ainscough R."/>
            <person name="Ambrose K.D."/>
            <person name="Ansari-Lari M.A."/>
            <person name="Aradhya S."/>
            <person name="Ashwell R.I."/>
            <person name="Babbage A.K."/>
            <person name="Bagguley C.L."/>
            <person name="Ballabio A."/>
            <person name="Banerjee R."/>
            <person name="Barker G.E."/>
            <person name="Barlow K.F."/>
            <person name="Barrett I.P."/>
            <person name="Bates K.N."/>
            <person name="Beare D.M."/>
            <person name="Beasley H."/>
            <person name="Beasley O."/>
            <person name="Beck A."/>
            <person name="Bethel G."/>
            <person name="Blechschmidt K."/>
            <person name="Brady N."/>
            <person name="Bray-Allen S."/>
            <person name="Bridgeman A.M."/>
            <person name="Brown A.J."/>
            <person name="Brown M.J."/>
            <person name="Bonnin D."/>
            <person name="Bruford E.A."/>
            <person name="Buhay C."/>
            <person name="Burch P."/>
            <person name="Burford D."/>
            <person name="Burgess J."/>
            <person name="Burrill W."/>
            <person name="Burton J."/>
            <person name="Bye J.M."/>
            <person name="Carder C."/>
            <person name="Carrel L."/>
            <person name="Chako J."/>
            <person name="Chapman J.C."/>
            <person name="Chavez D."/>
            <person name="Chen E."/>
            <person name="Chen G."/>
            <person name="Chen Y."/>
            <person name="Chen Z."/>
            <person name="Chinault C."/>
            <person name="Ciccodicola A."/>
            <person name="Clark S.Y."/>
            <person name="Clarke G."/>
            <person name="Clee C.M."/>
            <person name="Clegg S."/>
            <person name="Clerc-Blankenburg K."/>
            <person name="Clifford K."/>
            <person name="Cobley V."/>
            <person name="Cole C.G."/>
            <person name="Conquer J.S."/>
            <person name="Corby N."/>
            <person name="Connor R.E."/>
            <person name="David R."/>
            <person name="Davies J."/>
            <person name="Davis C."/>
            <person name="Davis J."/>
            <person name="Delgado O."/>
            <person name="Deshazo D."/>
            <person name="Dhami P."/>
            <person name="Ding Y."/>
            <person name="Dinh H."/>
            <person name="Dodsworth S."/>
            <person name="Draper H."/>
            <person name="Dugan-Rocha S."/>
            <person name="Dunham A."/>
            <person name="Dunn M."/>
            <person name="Durbin K.J."/>
            <person name="Dutta I."/>
            <person name="Eades T."/>
            <person name="Ellwood M."/>
            <person name="Emery-Cohen A."/>
            <person name="Errington H."/>
            <person name="Evans K.L."/>
            <person name="Faulkner L."/>
            <person name="Francis F."/>
            <person name="Frankland J."/>
            <person name="Fraser A.E."/>
            <person name="Galgoczy P."/>
            <person name="Gilbert J."/>
            <person name="Gill R."/>
            <person name="Gloeckner G."/>
            <person name="Gregory S.G."/>
            <person name="Gribble S."/>
            <person name="Griffiths C."/>
            <person name="Grocock R."/>
            <person name="Gu Y."/>
            <person name="Gwilliam R."/>
            <person name="Hamilton C."/>
            <person name="Hart E.A."/>
            <person name="Hawes A."/>
            <person name="Heath P.D."/>
            <person name="Heitmann K."/>
            <person name="Hennig S."/>
            <person name="Hernandez J."/>
            <person name="Hinzmann B."/>
            <person name="Ho S."/>
            <person name="Hoffs M."/>
            <person name="Howden P.J."/>
            <person name="Huckle E.J."/>
            <person name="Hume J."/>
            <person name="Hunt P.J."/>
            <person name="Hunt A.R."/>
            <person name="Isherwood J."/>
            <person name="Jacob L."/>
            <person name="Johnson D."/>
            <person name="Jones S."/>
            <person name="de Jong P.J."/>
            <person name="Joseph S.S."/>
            <person name="Keenan S."/>
            <person name="Kelly S."/>
            <person name="Kershaw J.K."/>
            <person name="Khan Z."/>
            <person name="Kioschis P."/>
            <person name="Klages S."/>
            <person name="Knights A.J."/>
            <person name="Kosiura A."/>
            <person name="Kovar-Smith C."/>
            <person name="Laird G.K."/>
            <person name="Langford C."/>
            <person name="Lawlor S."/>
            <person name="Leversha M."/>
            <person name="Lewis L."/>
            <person name="Liu W."/>
            <person name="Lloyd C."/>
            <person name="Lloyd D.M."/>
            <person name="Loulseged H."/>
            <person name="Loveland J.E."/>
            <person name="Lovell J.D."/>
            <person name="Lozado R."/>
            <person name="Lu J."/>
            <person name="Lyne R."/>
            <person name="Ma J."/>
            <person name="Maheshwari M."/>
            <person name="Matthews L.H."/>
            <person name="McDowall J."/>
            <person name="McLaren S."/>
            <person name="McMurray A."/>
            <person name="Meidl P."/>
            <person name="Meitinger T."/>
            <person name="Milne S."/>
            <person name="Miner G."/>
            <person name="Mistry S.L."/>
            <person name="Morgan M."/>
            <person name="Morris S."/>
            <person name="Mueller I."/>
            <person name="Mullikin J.C."/>
            <person name="Nguyen N."/>
            <person name="Nordsiek G."/>
            <person name="Nyakatura G."/>
            <person name="O'dell C.N."/>
            <person name="Okwuonu G."/>
            <person name="Palmer S."/>
            <person name="Pandian R."/>
            <person name="Parker D."/>
            <person name="Parrish J."/>
            <person name="Pasternak S."/>
            <person name="Patel D."/>
            <person name="Pearce A.V."/>
            <person name="Pearson D.M."/>
            <person name="Pelan S.E."/>
            <person name="Perez L."/>
            <person name="Porter K.M."/>
            <person name="Ramsey Y."/>
            <person name="Reichwald K."/>
            <person name="Rhodes S."/>
            <person name="Ridler K.A."/>
            <person name="Schlessinger D."/>
            <person name="Schueler M.G."/>
            <person name="Sehra H.K."/>
            <person name="Shaw-Smith C."/>
            <person name="Shen H."/>
            <person name="Sheridan E.M."/>
            <person name="Shownkeen R."/>
            <person name="Skuce C.D."/>
            <person name="Smith M.L."/>
            <person name="Sotheran E.C."/>
            <person name="Steingruber H.E."/>
            <person name="Steward C.A."/>
            <person name="Storey R."/>
            <person name="Swann R.M."/>
            <person name="Swarbreck D."/>
            <person name="Tabor P.E."/>
            <person name="Taudien S."/>
            <person name="Taylor T."/>
            <person name="Teague B."/>
            <person name="Thomas K."/>
            <person name="Thorpe A."/>
            <person name="Timms K."/>
            <person name="Tracey A."/>
            <person name="Trevanion S."/>
            <person name="Tromans A.C."/>
            <person name="d'Urso M."/>
            <person name="Verduzco D."/>
            <person name="Villasana D."/>
            <person name="Waldron L."/>
            <person name="Wall M."/>
            <person name="Wang Q."/>
            <person name="Warren J."/>
            <person name="Warry G.L."/>
            <person name="Wei X."/>
            <person name="West A."/>
            <person name="Whitehead S.L."/>
            <person name="Whiteley M.N."/>
            <person name="Wilkinson J.E."/>
            <person name="Willey D.L."/>
            <person name="Williams G."/>
            <person name="Williams L."/>
            <person name="Williamson A."/>
            <person name="Williamson H."/>
            <person name="Wilming L."/>
            <person name="Woodmansey R.L."/>
            <person name="Wray P.W."/>
            <person name="Yen J."/>
            <person name="Zhang J."/>
            <person name="Zhou J."/>
            <person name="Zoghbi H."/>
            <person name="Zorilla S."/>
            <person name="Buck D."/>
            <person name="Reinhardt R."/>
            <person name="Poustka A."/>
            <person name="Rosenthal A."/>
            <person name="Lehrach H."/>
            <person name="Meindl A."/>
            <person name="Minx P.J."/>
            <person name="Hillier L.W."/>
            <person name="Willard H.F."/>
            <person name="Wilson R.K."/>
            <person name="Waterston R.H."/>
            <person name="Rice C.M."/>
            <person name="Vaudin M."/>
            <person name="Coulson A."/>
            <person name="Nelson D.L."/>
            <person name="Weinstock G."/>
            <person name="Sulston J.E."/>
            <person name="Durbin R.M."/>
            <person name="Hubbard T."/>
            <person name="Gibbs R.A."/>
            <person name="Beck S."/>
            <person name="Rogers J."/>
            <person name="Bentley D.R."/>
        </authorList>
    </citation>
    <scope>NUCLEOTIDE SEQUENCE [LARGE SCALE GENOMIC DNA]</scope>
</reference>
<reference key="2">
    <citation type="journal article" date="2004" name="Genome Res.">
        <title>The status, quality, and expansion of the NIH full-length cDNA project: the Mammalian Gene Collection (MGC).</title>
        <authorList>
            <consortium name="The MGC Project Team"/>
        </authorList>
    </citation>
    <scope>NUCLEOTIDE SEQUENCE [LARGE SCALE MRNA]</scope>
</reference>
<reference key="3">
    <citation type="journal article" date="1999" name="Cancer Res.">
        <title>Characterization of the GAGE genes that are expressed in various human cancers and in normal testis.</title>
        <authorList>
            <person name="De Backer O."/>
            <person name="Arden K.C."/>
            <person name="Boretti M."/>
            <person name="Vantomme V."/>
            <person name="De Smet C."/>
            <person name="Czekay S."/>
            <person name="Viars C.S."/>
            <person name="De Plaen E."/>
            <person name="Brasseur F."/>
            <person name="Chomez P."/>
            <person name="Van den Eynde B."/>
            <person name="Boon T."/>
            <person name="van der Bruggen P."/>
        </authorList>
    </citation>
    <scope>CHARACTERIZATION OF ANTIGENIC PEPTIDES</scope>
</reference>
<reference key="4">
    <citation type="journal article" date="2008" name="Tissue Antigens">
        <title>An overview of the GAGE cancer/testis antigen family with the inclusion of newly identified members.</title>
        <authorList>
            <person name="Gjerstorff M.F."/>
            <person name="Ditzel H.J."/>
        </authorList>
    </citation>
    <scope>GAGE FAMILY</scope>
</reference>
<dbReference type="EMBL" id="AC142497">
    <property type="status" value="NOT_ANNOTATED_CDS"/>
    <property type="molecule type" value="Genomic_DNA"/>
</dbReference>
<dbReference type="EMBL" id="BC069397">
    <property type="protein sequence ID" value="AAH69397.1"/>
    <property type="molecule type" value="mRNA"/>
</dbReference>
<dbReference type="CCDS" id="CCDS48114.1"/>
<dbReference type="RefSeq" id="NP_001120684.1">
    <property type="nucleotide sequence ID" value="NM_001127212.4"/>
</dbReference>
<dbReference type="BioGRID" id="609848">
    <property type="interactions" value="2"/>
</dbReference>
<dbReference type="STRING" id="9606.ENSP00000355421"/>
<dbReference type="iPTMnet" id="Q6NT46"/>
<dbReference type="PhosphoSitePlus" id="Q6NT46"/>
<dbReference type="BioMuta" id="GAGE2A"/>
<dbReference type="DMDM" id="74736753"/>
<dbReference type="jPOST" id="Q6NT46"/>
<dbReference type="MassIVE" id="Q6NT46"/>
<dbReference type="PaxDb" id="9606-ENSP00000355421"/>
<dbReference type="PeptideAtlas" id="Q6NT46"/>
<dbReference type="ProteomicsDB" id="66657"/>
<dbReference type="Pumba" id="Q6NT46"/>
<dbReference type="TopDownProteomics" id="Q6NT46"/>
<dbReference type="Antibodypedia" id="57024">
    <property type="antibodies" value="46 antibodies from 7 providers"/>
</dbReference>
<dbReference type="DNASU" id="729447"/>
<dbReference type="Ensembl" id="ENST00000362097.2">
    <property type="protein sequence ID" value="ENSP00000355421.1"/>
    <property type="gene ID" value="ENSG00000189064.9"/>
</dbReference>
<dbReference type="GeneID" id="729447"/>
<dbReference type="KEGG" id="hsa:729447"/>
<dbReference type="MANE-Select" id="ENST00000362097.2">
    <property type="protein sequence ID" value="ENSP00000355421.1"/>
    <property type="RefSeq nucleotide sequence ID" value="NM_001127212.4"/>
    <property type="RefSeq protein sequence ID" value="NP_001120684.1"/>
</dbReference>
<dbReference type="UCSC" id="uc004doi.6">
    <property type="organism name" value="human"/>
</dbReference>
<dbReference type="AGR" id="HGNC:4099"/>
<dbReference type="CTD" id="729447"/>
<dbReference type="DisGeNET" id="729447"/>
<dbReference type="GeneCards" id="GAGE2A"/>
<dbReference type="HGNC" id="HGNC:4099">
    <property type="gene designation" value="GAGE2A"/>
</dbReference>
<dbReference type="HPA" id="ENSG00000189064">
    <property type="expression patterns" value="Tissue enriched (testis)"/>
</dbReference>
<dbReference type="MIM" id="300720">
    <property type="type" value="gene"/>
</dbReference>
<dbReference type="neXtProt" id="NX_Q6NT46"/>
<dbReference type="OpenTargets" id="ENSG00000189064"/>
<dbReference type="PharmGKB" id="PA162389230"/>
<dbReference type="VEuPathDB" id="HostDB:ENSG00000189064"/>
<dbReference type="eggNOG" id="ENOG502SZ68">
    <property type="taxonomic scope" value="Eukaryota"/>
</dbReference>
<dbReference type="GeneTree" id="ENSGT00940000153097"/>
<dbReference type="HOGENOM" id="CLU_150116_0_0_1"/>
<dbReference type="InParanoid" id="Q6NT46"/>
<dbReference type="OMA" id="NHANCRV"/>
<dbReference type="OrthoDB" id="9539459at2759"/>
<dbReference type="PAN-GO" id="Q6NT46">
    <property type="GO annotations" value="0 GO annotations based on evolutionary models"/>
</dbReference>
<dbReference type="PhylomeDB" id="Q6NT46"/>
<dbReference type="TreeFam" id="TF340669"/>
<dbReference type="PathwayCommons" id="Q6NT46"/>
<dbReference type="BioGRID-ORCS" id="729447">
    <property type="hits" value="16 hits in 259 CRISPR screens"/>
</dbReference>
<dbReference type="ChiTaRS" id="GAGE2A">
    <property type="organism name" value="human"/>
</dbReference>
<dbReference type="GenomeRNAi" id="729447"/>
<dbReference type="Pharos" id="Q6NT46">
    <property type="development level" value="Tdark"/>
</dbReference>
<dbReference type="PRO" id="PR:Q6NT46"/>
<dbReference type="Proteomes" id="UP000005640">
    <property type="component" value="Chromosome X"/>
</dbReference>
<dbReference type="RNAct" id="Q6NT46">
    <property type="molecule type" value="protein"/>
</dbReference>
<dbReference type="Bgee" id="ENSG00000189064">
    <property type="expression patterns" value="Expressed in male germ line stem cell (sensu Vertebrata) in testis and 71 other cell types or tissues"/>
</dbReference>
<dbReference type="InterPro" id="IPR031320">
    <property type="entry name" value="GAGE"/>
</dbReference>
<dbReference type="InterPro" id="IPR008625">
    <property type="entry name" value="GAGE_fam"/>
</dbReference>
<dbReference type="PANTHER" id="PTHR14047:SF30">
    <property type="entry name" value="G ANTIGEN 1-RELATED"/>
    <property type="match status" value="1"/>
</dbReference>
<dbReference type="PANTHER" id="PTHR14047">
    <property type="entry name" value="P ANTIGEN FAMILY MEMBER 5-RELATED"/>
    <property type="match status" value="1"/>
</dbReference>
<dbReference type="Pfam" id="PF05831">
    <property type="entry name" value="GAGE"/>
    <property type="match status" value="1"/>
</dbReference>
<dbReference type="SMART" id="SM01379">
    <property type="entry name" value="GAGE"/>
    <property type="match status" value="1"/>
</dbReference>
<comment type="miscellaneous">
    <text>This gene belongs to a multigene family expressed in a large variety of tumors whereas in normal tissues, expression is restricted to germ cells. These genes organized in clustered repeats, have a high degree of predicted sequence identity, but differ by scattered single nucleotide substitution. Their sequences contain either the antigenic peptide YYWPRPRRY or YRPRPRRY which is recognized by cytotoxic T-cells.</text>
</comment>
<comment type="similarity">
    <text evidence="2">Belongs to the GAGE family.</text>
</comment>
<comment type="caution">
    <text evidence="2">The first GAGE nomenclature was based on identified mRNA sequences, but the high identity of the GAGE members made impossible to separate products of paralogous genes from polymorph products. PubMed:18179644 presented a new GAGE gene nomenclature based on the identified genes and their products.</text>
</comment>